<gene>
    <name evidence="1" type="primary">rpmH</name>
    <name type="ordered locus">USA300HOU_2717</name>
</gene>
<name>RL34_STAAT</name>
<comment type="similarity">
    <text evidence="1">Belongs to the bacterial ribosomal protein bL34 family.</text>
</comment>
<accession>A8YYS3</accession>
<protein>
    <recommendedName>
        <fullName evidence="1">Large ribosomal subunit protein bL34</fullName>
    </recommendedName>
    <alternativeName>
        <fullName evidence="3">50S ribosomal protein L34</fullName>
    </alternativeName>
</protein>
<dbReference type="EMBL" id="CP000730">
    <property type="protein sequence ID" value="ABX30703.1"/>
    <property type="molecule type" value="Genomic_DNA"/>
</dbReference>
<dbReference type="RefSeq" id="WP_000240855.1">
    <property type="nucleotide sequence ID" value="NC_010079.1"/>
</dbReference>
<dbReference type="SMR" id="A8YYS3"/>
<dbReference type="GeneID" id="98347025"/>
<dbReference type="KEGG" id="sax:USA300HOU_2717"/>
<dbReference type="HOGENOM" id="CLU_129938_2_0_9"/>
<dbReference type="GO" id="GO:1990904">
    <property type="term" value="C:ribonucleoprotein complex"/>
    <property type="evidence" value="ECO:0007669"/>
    <property type="project" value="UniProtKB-KW"/>
</dbReference>
<dbReference type="GO" id="GO:0005840">
    <property type="term" value="C:ribosome"/>
    <property type="evidence" value="ECO:0007669"/>
    <property type="project" value="UniProtKB-KW"/>
</dbReference>
<dbReference type="GO" id="GO:0003735">
    <property type="term" value="F:structural constituent of ribosome"/>
    <property type="evidence" value="ECO:0007669"/>
    <property type="project" value="InterPro"/>
</dbReference>
<dbReference type="GO" id="GO:0006412">
    <property type="term" value="P:translation"/>
    <property type="evidence" value="ECO:0007669"/>
    <property type="project" value="UniProtKB-UniRule"/>
</dbReference>
<dbReference type="FunFam" id="1.10.287.3980:FF:000001">
    <property type="entry name" value="Mitochondrial ribosomal protein L34"/>
    <property type="match status" value="1"/>
</dbReference>
<dbReference type="Gene3D" id="1.10.287.3980">
    <property type="match status" value="1"/>
</dbReference>
<dbReference type="HAMAP" id="MF_00391">
    <property type="entry name" value="Ribosomal_bL34"/>
    <property type="match status" value="1"/>
</dbReference>
<dbReference type="InterPro" id="IPR000271">
    <property type="entry name" value="Ribosomal_bL34"/>
</dbReference>
<dbReference type="InterPro" id="IPR020939">
    <property type="entry name" value="Ribosomal_bL34_CS"/>
</dbReference>
<dbReference type="NCBIfam" id="TIGR01030">
    <property type="entry name" value="rpmH_bact"/>
    <property type="match status" value="1"/>
</dbReference>
<dbReference type="PANTHER" id="PTHR14503:SF4">
    <property type="entry name" value="LARGE RIBOSOMAL SUBUNIT PROTEIN BL34M"/>
    <property type="match status" value="1"/>
</dbReference>
<dbReference type="PANTHER" id="PTHR14503">
    <property type="entry name" value="MITOCHONDRIAL RIBOSOMAL PROTEIN 34 FAMILY MEMBER"/>
    <property type="match status" value="1"/>
</dbReference>
<dbReference type="Pfam" id="PF00468">
    <property type="entry name" value="Ribosomal_L34"/>
    <property type="match status" value="1"/>
</dbReference>
<dbReference type="PROSITE" id="PS00784">
    <property type="entry name" value="RIBOSOMAL_L34"/>
    <property type="match status" value="1"/>
</dbReference>
<keyword id="KW-0687">Ribonucleoprotein</keyword>
<keyword id="KW-0689">Ribosomal protein</keyword>
<feature type="chain" id="PRO_1000080273" description="Large ribosomal subunit protein bL34">
    <location>
        <begin position="1"/>
        <end position="45"/>
    </location>
</feature>
<feature type="region of interest" description="Disordered" evidence="2">
    <location>
        <begin position="1"/>
        <end position="45"/>
    </location>
</feature>
<evidence type="ECO:0000255" key="1">
    <source>
        <dbReference type="HAMAP-Rule" id="MF_00391"/>
    </source>
</evidence>
<evidence type="ECO:0000256" key="2">
    <source>
        <dbReference type="SAM" id="MobiDB-lite"/>
    </source>
</evidence>
<evidence type="ECO:0000305" key="3"/>
<reference key="1">
    <citation type="journal article" date="2007" name="BMC Microbiol.">
        <title>Subtle genetic changes enhance virulence of methicillin resistant and sensitive Staphylococcus aureus.</title>
        <authorList>
            <person name="Highlander S.K."/>
            <person name="Hulten K.G."/>
            <person name="Qin X."/>
            <person name="Jiang H."/>
            <person name="Yerrapragada S."/>
            <person name="Mason E.O. Jr."/>
            <person name="Shang Y."/>
            <person name="Williams T.M."/>
            <person name="Fortunov R.M."/>
            <person name="Liu Y."/>
            <person name="Igboeli O."/>
            <person name="Petrosino J."/>
            <person name="Tirumalai M."/>
            <person name="Uzman A."/>
            <person name="Fox G.E."/>
            <person name="Cardenas A.M."/>
            <person name="Muzny D.M."/>
            <person name="Hemphill L."/>
            <person name="Ding Y."/>
            <person name="Dugan S."/>
            <person name="Blyth P.R."/>
            <person name="Buhay C.J."/>
            <person name="Dinh H.H."/>
            <person name="Hawes A.C."/>
            <person name="Holder M."/>
            <person name="Kovar C.L."/>
            <person name="Lee S.L."/>
            <person name="Liu W."/>
            <person name="Nazareth L.V."/>
            <person name="Wang Q."/>
            <person name="Zhou J."/>
            <person name="Kaplan S.L."/>
            <person name="Weinstock G.M."/>
        </authorList>
    </citation>
    <scope>NUCLEOTIDE SEQUENCE [LARGE SCALE GENOMIC DNA]</scope>
    <source>
        <strain>USA300 / TCH1516</strain>
    </source>
</reference>
<proteinExistence type="inferred from homology"/>
<organism>
    <name type="scientific">Staphylococcus aureus (strain USA300 / TCH1516)</name>
    <dbReference type="NCBI Taxonomy" id="451516"/>
    <lineage>
        <taxon>Bacteria</taxon>
        <taxon>Bacillati</taxon>
        <taxon>Bacillota</taxon>
        <taxon>Bacilli</taxon>
        <taxon>Bacillales</taxon>
        <taxon>Staphylococcaceae</taxon>
        <taxon>Staphylococcus</taxon>
    </lineage>
</organism>
<sequence>MVKRTYQPNKRKHSKVHGFRKRMSTKNGRKVLARRRRKGRKVLSA</sequence>